<accession>Q9ZK47</accession>
<evidence type="ECO:0000250" key="1">
    <source>
        <dbReference type="UniProtKB" id="P15078"/>
    </source>
</evidence>
<evidence type="ECO:0000255" key="2"/>
<evidence type="ECO:0000305" key="3"/>
<gene>
    <name type="primary">cstA</name>
    <name type="ordered locus">jhp_1095</name>
</gene>
<organism>
    <name type="scientific">Helicobacter pylori (strain J99 / ATCC 700824)</name>
    <name type="common">Campylobacter pylori J99</name>
    <dbReference type="NCBI Taxonomy" id="85963"/>
    <lineage>
        <taxon>Bacteria</taxon>
        <taxon>Pseudomonadati</taxon>
        <taxon>Campylobacterota</taxon>
        <taxon>Epsilonproteobacteria</taxon>
        <taxon>Campylobacterales</taxon>
        <taxon>Helicobacteraceae</taxon>
        <taxon>Helicobacter</taxon>
    </lineage>
</organism>
<protein>
    <recommendedName>
        <fullName evidence="3">Peptide transporter CstA</fullName>
    </recommendedName>
    <alternativeName>
        <fullName evidence="3">Carbon starvation protein A homolog</fullName>
    </alternativeName>
</protein>
<feature type="chain" id="PRO_0000190048" description="Peptide transporter CstA">
    <location>
        <begin position="1"/>
        <end position="687"/>
    </location>
</feature>
<feature type="transmembrane region" description="Helical" evidence="2">
    <location>
        <begin position="6"/>
        <end position="26"/>
    </location>
</feature>
<feature type="transmembrane region" description="Helical" evidence="2">
    <location>
        <begin position="29"/>
        <end position="49"/>
    </location>
</feature>
<feature type="transmembrane region" description="Helical" evidence="2">
    <location>
        <begin position="87"/>
        <end position="107"/>
    </location>
</feature>
<feature type="transmembrane region" description="Helical" evidence="2">
    <location>
        <begin position="117"/>
        <end position="137"/>
    </location>
</feature>
<feature type="transmembrane region" description="Helical" evidence="2">
    <location>
        <begin position="162"/>
        <end position="182"/>
    </location>
</feature>
<feature type="transmembrane region" description="Helical" evidence="2">
    <location>
        <begin position="190"/>
        <end position="210"/>
    </location>
</feature>
<feature type="transmembrane region" description="Helical" evidence="2">
    <location>
        <begin position="221"/>
        <end position="241"/>
    </location>
</feature>
<feature type="transmembrane region" description="Helical" evidence="2">
    <location>
        <begin position="256"/>
        <end position="276"/>
    </location>
</feature>
<feature type="transmembrane region" description="Helical" evidence="2">
    <location>
        <begin position="285"/>
        <end position="305"/>
    </location>
</feature>
<feature type="transmembrane region" description="Helical" evidence="2">
    <location>
        <begin position="325"/>
        <end position="345"/>
    </location>
</feature>
<feature type="transmembrane region" description="Helical" evidence="2">
    <location>
        <begin position="373"/>
        <end position="393"/>
    </location>
</feature>
<feature type="transmembrane region" description="Helical" evidence="2">
    <location>
        <begin position="440"/>
        <end position="460"/>
    </location>
</feature>
<feature type="transmembrane region" description="Helical" evidence="2">
    <location>
        <begin position="462"/>
        <end position="482"/>
    </location>
</feature>
<feature type="transmembrane region" description="Helical" evidence="2">
    <location>
        <begin position="513"/>
        <end position="533"/>
    </location>
</feature>
<feature type="transmembrane region" description="Helical" evidence="2">
    <location>
        <begin position="546"/>
        <end position="566"/>
    </location>
</feature>
<feature type="transmembrane region" description="Helical" evidence="2">
    <location>
        <begin position="574"/>
        <end position="594"/>
    </location>
</feature>
<feature type="transmembrane region" description="Helical" evidence="2">
    <location>
        <begin position="642"/>
        <end position="662"/>
    </location>
</feature>
<sequence>MQKSLVSLAWVFVAILGAICLGVLALHKGESINTLWLVVASACIYSIGYRFYSHFIAYRVLKLDDSRATPACVRNDGKDFVPTDKAITFGHHFAAIAGAGPLVGPILAAQMGYLPSILWILIGSVLGGCVHDFVVLFASIRRDGKSLGEMIKLEMGKFVGMIASLGILGIMLIIIAILAMVVVKALAHSPWGFFTIAMTIPIAILMGLYMRFFRPHKILEVSVIGFILLIIAIYAGKYVSLDPKLASIFTFEAGSLAWMIMGYGFVASILPVWFLLAPRDYLSTFLKIGVIGVLVVAIVFVAPPLQIPKITPFVDGSGPVFAGSVFPFLFITVACGTISGFHALISSGTTPKMLAKESDARLVGYGSMVMESVVALMALVCAGILHPGLYFAINSPEVSIGKDIADAASVISSWGFSISAEEIREMTKNIGESSILSRTGGAPTFAIGLAMIVYHILGDPSVMAFWYHFAILFEALFILTAVDAGTRTARFMIQDLLGNIYKPLGDLSSYKAGIFATLLCVAGWGYFLYQGTIDPKGGIYTLWPLFGVSNQMLAGMALLLVTVVLFKMGRFKGAIISALPAVLILAITFYSGILKVMPKSNDSVLNNVSHVAQMQIIKEKIALTTDEKALKTLQKSFFNHAIDAILCVFFMLVALLVLIVSVRICSNAYFKNQIYPPLAETPYIKAA</sequence>
<name>CSTA_HELPJ</name>
<keyword id="KW-0997">Cell inner membrane</keyword>
<keyword id="KW-1003">Cell membrane</keyword>
<keyword id="KW-0472">Membrane</keyword>
<keyword id="KW-0571">Peptide transport</keyword>
<keyword id="KW-0653">Protein transport</keyword>
<keyword id="KW-0812">Transmembrane</keyword>
<keyword id="KW-1133">Transmembrane helix</keyword>
<keyword id="KW-0813">Transport</keyword>
<reference key="1">
    <citation type="journal article" date="1999" name="Nature">
        <title>Genomic sequence comparison of two unrelated isolates of the human gastric pathogen Helicobacter pylori.</title>
        <authorList>
            <person name="Alm R.A."/>
            <person name="Ling L.-S.L."/>
            <person name="Moir D.T."/>
            <person name="King B.L."/>
            <person name="Brown E.D."/>
            <person name="Doig P.C."/>
            <person name="Smith D.R."/>
            <person name="Noonan B."/>
            <person name="Guild B.C."/>
            <person name="deJonge B.L."/>
            <person name="Carmel G."/>
            <person name="Tummino P.J."/>
            <person name="Caruso A."/>
            <person name="Uria-Nickelsen M."/>
            <person name="Mills D.M."/>
            <person name="Ives C."/>
            <person name="Gibson R."/>
            <person name="Merberg D."/>
            <person name="Mills S.D."/>
            <person name="Jiang Q."/>
            <person name="Taylor D.E."/>
            <person name="Vovis G.F."/>
            <person name="Trust T.J."/>
        </authorList>
    </citation>
    <scope>NUCLEOTIDE SEQUENCE [LARGE SCALE GENOMIC DNA]</scope>
    <source>
        <strain>J99 / ATCC 700824</strain>
    </source>
</reference>
<comment type="function">
    <text evidence="1">Involved in peptide utilization.</text>
</comment>
<comment type="subcellular location">
    <subcellularLocation>
        <location evidence="3">Cell inner membrane</location>
        <topology evidence="2">Multi-pass membrane protein</topology>
    </subcellularLocation>
</comment>
<comment type="similarity">
    <text evidence="3">Belongs to the peptide transporter carbon starvation (CstA) (TC 2.A.114) family.</text>
</comment>
<proteinExistence type="inferred from homology"/>
<dbReference type="EMBL" id="AE001439">
    <property type="protein sequence ID" value="AAD06677.1"/>
    <property type="molecule type" value="Genomic_DNA"/>
</dbReference>
<dbReference type="PIR" id="C71849">
    <property type="entry name" value="C71849"/>
</dbReference>
<dbReference type="KEGG" id="hpj:jhp_1095"/>
<dbReference type="PATRIC" id="fig|85963.30.peg.1487"/>
<dbReference type="eggNOG" id="COG1966">
    <property type="taxonomic scope" value="Bacteria"/>
</dbReference>
<dbReference type="Proteomes" id="UP000000804">
    <property type="component" value="Chromosome"/>
</dbReference>
<dbReference type="GO" id="GO:0005886">
    <property type="term" value="C:plasma membrane"/>
    <property type="evidence" value="ECO:0007669"/>
    <property type="project" value="UniProtKB-SubCell"/>
</dbReference>
<dbReference type="GO" id="GO:0009267">
    <property type="term" value="P:cellular response to starvation"/>
    <property type="evidence" value="ECO:0007669"/>
    <property type="project" value="InterPro"/>
</dbReference>
<dbReference type="GO" id="GO:0015833">
    <property type="term" value="P:peptide transport"/>
    <property type="evidence" value="ECO:0007669"/>
    <property type="project" value="UniProtKB-KW"/>
</dbReference>
<dbReference type="GO" id="GO:0015031">
    <property type="term" value="P:protein transport"/>
    <property type="evidence" value="ECO:0007669"/>
    <property type="project" value="UniProtKB-KW"/>
</dbReference>
<dbReference type="InterPro" id="IPR051605">
    <property type="entry name" value="CstA"/>
</dbReference>
<dbReference type="InterPro" id="IPR003706">
    <property type="entry name" value="CstA_N"/>
</dbReference>
<dbReference type="PANTHER" id="PTHR30252">
    <property type="entry name" value="INNER MEMBRANE PEPTIDE TRANSPORTER"/>
    <property type="match status" value="1"/>
</dbReference>
<dbReference type="PANTHER" id="PTHR30252:SF3">
    <property type="entry name" value="PYRUVATE_PROTON SYMPORTER BTST"/>
    <property type="match status" value="1"/>
</dbReference>
<dbReference type="Pfam" id="PF02554">
    <property type="entry name" value="CstA"/>
    <property type="match status" value="1"/>
</dbReference>